<reference key="1">
    <citation type="journal article" date="2008" name="Genome Res.">
        <title>Comparative genome analysis of Salmonella enteritidis PT4 and Salmonella gallinarum 287/91 provides insights into evolutionary and host adaptation pathways.</title>
        <authorList>
            <person name="Thomson N.R."/>
            <person name="Clayton D.J."/>
            <person name="Windhorst D."/>
            <person name="Vernikos G."/>
            <person name="Davidson S."/>
            <person name="Churcher C."/>
            <person name="Quail M.A."/>
            <person name="Stevens M."/>
            <person name="Jones M.A."/>
            <person name="Watson M."/>
            <person name="Barron A."/>
            <person name="Layton A."/>
            <person name="Pickard D."/>
            <person name="Kingsley R.A."/>
            <person name="Bignell A."/>
            <person name="Clark L."/>
            <person name="Harris B."/>
            <person name="Ormond D."/>
            <person name="Abdellah Z."/>
            <person name="Brooks K."/>
            <person name="Cherevach I."/>
            <person name="Chillingworth T."/>
            <person name="Woodward J."/>
            <person name="Norberczak H."/>
            <person name="Lord A."/>
            <person name="Arrowsmith C."/>
            <person name="Jagels K."/>
            <person name="Moule S."/>
            <person name="Mungall K."/>
            <person name="Saunders M."/>
            <person name="Whitehead S."/>
            <person name="Chabalgoity J.A."/>
            <person name="Maskell D."/>
            <person name="Humphreys T."/>
            <person name="Roberts M."/>
            <person name="Barrow P.A."/>
            <person name="Dougan G."/>
            <person name="Parkhill J."/>
        </authorList>
    </citation>
    <scope>NUCLEOTIDE SEQUENCE [LARGE SCALE GENOMIC DNA]</scope>
    <source>
        <strain>P125109</strain>
    </source>
</reference>
<gene>
    <name evidence="1" type="primary">tsgA</name>
    <name type="ordered locus">SEN3300</name>
</gene>
<organism>
    <name type="scientific">Salmonella enteritidis PT4 (strain P125109)</name>
    <dbReference type="NCBI Taxonomy" id="550537"/>
    <lineage>
        <taxon>Bacteria</taxon>
        <taxon>Pseudomonadati</taxon>
        <taxon>Pseudomonadota</taxon>
        <taxon>Gammaproteobacteria</taxon>
        <taxon>Enterobacterales</taxon>
        <taxon>Enterobacteriaceae</taxon>
        <taxon>Salmonella</taxon>
    </lineage>
</organism>
<evidence type="ECO:0000255" key="1">
    <source>
        <dbReference type="HAMAP-Rule" id="MF_01044"/>
    </source>
</evidence>
<keyword id="KW-0997">Cell inner membrane</keyword>
<keyword id="KW-1003">Cell membrane</keyword>
<keyword id="KW-0472">Membrane</keyword>
<keyword id="KW-0812">Transmembrane</keyword>
<keyword id="KW-1133">Transmembrane helix</keyword>
<proteinExistence type="inferred from homology"/>
<protein>
    <recommendedName>
        <fullName evidence="1">Protein TsgA</fullName>
    </recommendedName>
</protein>
<dbReference type="EMBL" id="AM933172">
    <property type="protein sequence ID" value="CAR34875.1"/>
    <property type="molecule type" value="Genomic_DNA"/>
</dbReference>
<dbReference type="RefSeq" id="WP_000185217.1">
    <property type="nucleotide sequence ID" value="NC_011294.1"/>
</dbReference>
<dbReference type="SMR" id="B5R2C3"/>
<dbReference type="KEGG" id="set:SEN3300"/>
<dbReference type="HOGENOM" id="CLU_056916_0_0_6"/>
<dbReference type="Proteomes" id="UP000000613">
    <property type="component" value="Chromosome"/>
</dbReference>
<dbReference type="GO" id="GO:0005886">
    <property type="term" value="C:plasma membrane"/>
    <property type="evidence" value="ECO:0007669"/>
    <property type="project" value="UniProtKB-SubCell"/>
</dbReference>
<dbReference type="GO" id="GO:0022857">
    <property type="term" value="F:transmembrane transporter activity"/>
    <property type="evidence" value="ECO:0007669"/>
    <property type="project" value="InterPro"/>
</dbReference>
<dbReference type="FunFam" id="1.20.1250.20:FF:000032">
    <property type="entry name" value="Protein TsgA"/>
    <property type="match status" value="1"/>
</dbReference>
<dbReference type="FunFam" id="1.20.1250.20:FF:000052">
    <property type="entry name" value="Protein TsgA"/>
    <property type="match status" value="1"/>
</dbReference>
<dbReference type="Gene3D" id="1.20.1250.20">
    <property type="entry name" value="MFS general substrate transporter like domains"/>
    <property type="match status" value="2"/>
</dbReference>
<dbReference type="HAMAP" id="MF_01044">
    <property type="entry name" value="MFS_TsgA"/>
    <property type="match status" value="1"/>
</dbReference>
<dbReference type="InterPro" id="IPR011701">
    <property type="entry name" value="MFS"/>
</dbReference>
<dbReference type="InterPro" id="IPR020846">
    <property type="entry name" value="MFS_dom"/>
</dbReference>
<dbReference type="InterPro" id="IPR036259">
    <property type="entry name" value="MFS_trans_sf"/>
</dbReference>
<dbReference type="InterPro" id="IPR023528">
    <property type="entry name" value="MFS_TsgA"/>
</dbReference>
<dbReference type="InterPro" id="IPR050375">
    <property type="entry name" value="MFS_TsgA-like"/>
</dbReference>
<dbReference type="NCBIfam" id="NF002982">
    <property type="entry name" value="PRK03699.1"/>
    <property type="match status" value="1"/>
</dbReference>
<dbReference type="PANTHER" id="PTHR43702">
    <property type="entry name" value="L-FUCOSE-PROTON SYMPORTER"/>
    <property type="match status" value="1"/>
</dbReference>
<dbReference type="PANTHER" id="PTHR43702:SF3">
    <property type="entry name" value="PROTEIN TSGA"/>
    <property type="match status" value="1"/>
</dbReference>
<dbReference type="Pfam" id="PF07690">
    <property type="entry name" value="MFS_1"/>
    <property type="match status" value="1"/>
</dbReference>
<dbReference type="SUPFAM" id="SSF103473">
    <property type="entry name" value="MFS general substrate transporter"/>
    <property type="match status" value="1"/>
</dbReference>
<dbReference type="PROSITE" id="PS50850">
    <property type="entry name" value="MFS"/>
    <property type="match status" value="1"/>
</dbReference>
<comment type="subcellular location">
    <subcellularLocation>
        <location evidence="1">Cell inner membrane</location>
        <topology evidence="1">Multi-pass membrane protein</topology>
    </subcellularLocation>
</comment>
<comment type="similarity">
    <text evidence="1">Belongs to the major facilitator superfamily. TsgA family.</text>
</comment>
<feature type="chain" id="PRO_1000136147" description="Protein TsgA">
    <location>
        <begin position="1"/>
        <end position="393"/>
    </location>
</feature>
<feature type="transmembrane region" description="Helical" evidence="1">
    <location>
        <begin position="11"/>
        <end position="31"/>
    </location>
</feature>
<feature type="transmembrane region" description="Helical" evidence="1">
    <location>
        <begin position="51"/>
        <end position="71"/>
    </location>
</feature>
<feature type="transmembrane region" description="Helical" evidence="1">
    <location>
        <begin position="78"/>
        <end position="98"/>
    </location>
</feature>
<feature type="transmembrane region" description="Helical" evidence="1">
    <location>
        <begin position="101"/>
        <end position="121"/>
    </location>
</feature>
<feature type="transmembrane region" description="Helical" evidence="1">
    <location>
        <begin position="134"/>
        <end position="154"/>
    </location>
</feature>
<feature type="transmembrane region" description="Helical" evidence="1">
    <location>
        <begin position="162"/>
        <end position="182"/>
    </location>
</feature>
<feature type="transmembrane region" description="Helical" evidence="1">
    <location>
        <begin position="206"/>
        <end position="226"/>
    </location>
</feature>
<feature type="transmembrane region" description="Helical" evidence="1">
    <location>
        <begin position="245"/>
        <end position="265"/>
    </location>
</feature>
<feature type="transmembrane region" description="Helical" evidence="1">
    <location>
        <begin position="273"/>
        <end position="293"/>
    </location>
</feature>
<feature type="transmembrane region" description="Helical" evidence="1">
    <location>
        <begin position="298"/>
        <end position="318"/>
    </location>
</feature>
<feature type="transmembrane region" description="Helical" evidence="1">
    <location>
        <begin position="332"/>
        <end position="352"/>
    </location>
</feature>
<feature type="transmembrane region" description="Helical" evidence="1">
    <location>
        <begin position="361"/>
        <end position="381"/>
    </location>
</feature>
<accession>B5R2C3</accession>
<sequence>MTNSNRIKLTWISFLSYALTGALVIVTGMVMGNIADYFHLPVSSMSNTFTFLNAGILISIFLNAWLMEIVPLKTQLRFGFILMVLAVAGLMFSHSLALFSAAMFVLGLVSGITMSIGTFLITQLYEGRQRGSRLLFTDSFFSMAGMIFPMVAAFLLARSIEWYWVYACIGLVYLAIFILTFGCEFPALGKHAQHSQAPVAKEKWGIGVLFLAVAALCYILGQLGFISWVPEYAKGLGMSLNDAGALVSDFWMSYMFGMWAFSFILRFFDLQRILTVLAGMAAVLMYLFITGTQAHMPWFILTLGFFSSAIYTSIITLGSQQTKVASPKLVNFILTCGTIGTMLTFVVTGPIVAHSGPQAALLTANGLYAVVFVMCFALGFVSRHRQHSAPATH</sequence>
<name>TSGA_SALEP</name>